<proteinExistence type="predicted"/>
<evidence type="ECO:0000250" key="1"/>
<evidence type="ECO:0000255" key="2">
    <source>
        <dbReference type="PROSITE-ProRule" id="PRU00140"/>
    </source>
</evidence>
<evidence type="ECO:0000255" key="3">
    <source>
        <dbReference type="PROSITE-ProRule" id="PRU00193"/>
    </source>
</evidence>
<evidence type="ECO:0000269" key="4">
    <source>
    </source>
</evidence>
<evidence type="ECO:0000303" key="5">
    <source>
    </source>
</evidence>
<evidence type="ECO:0000305" key="6"/>
<reference key="1">
    <citation type="journal article" date="1997" name="Science">
        <title>The complete genome sequence of Escherichia coli K-12.</title>
        <authorList>
            <person name="Blattner F.R."/>
            <person name="Plunkett G. III"/>
            <person name="Bloch C.A."/>
            <person name="Perna N.T."/>
            <person name="Burland V."/>
            <person name="Riley M."/>
            <person name="Collado-Vides J."/>
            <person name="Glasner J.D."/>
            <person name="Rode C.K."/>
            <person name="Mayhew G.F."/>
            <person name="Gregor J."/>
            <person name="Davis N.W."/>
            <person name="Kirkpatrick H.A."/>
            <person name="Goeden M.A."/>
            <person name="Rose D.J."/>
            <person name="Mau B."/>
            <person name="Shao Y."/>
        </authorList>
    </citation>
    <scope>NUCLEOTIDE SEQUENCE [LARGE SCALE GENOMIC DNA]</scope>
    <source>
        <strain>K12 / MG1655 / ATCC 47076</strain>
    </source>
</reference>
<reference key="2">
    <citation type="journal article" date="2006" name="Mol. Syst. Biol.">
        <title>Highly accurate genome sequences of Escherichia coli K-12 strains MG1655 and W3110.</title>
        <authorList>
            <person name="Hayashi K."/>
            <person name="Morooka N."/>
            <person name="Yamamoto Y."/>
            <person name="Fujita K."/>
            <person name="Isono K."/>
            <person name="Choi S."/>
            <person name="Ohtsubo E."/>
            <person name="Baba T."/>
            <person name="Wanner B.L."/>
            <person name="Mori H."/>
            <person name="Horiuchi T."/>
        </authorList>
    </citation>
    <scope>NUCLEOTIDE SEQUENCE [LARGE SCALE GENOMIC DNA]</scope>
    <source>
        <strain>K12 / W3110 / ATCC 27325 / DSM 5911</strain>
    </source>
</reference>
<reference key="3">
    <citation type="journal article" date="2019" name="J. Bacteriol.">
        <title>Identification of a formate-dependent uric acid degradation pathway in Escherichia coli.</title>
        <authorList>
            <person name="Iwadate Y."/>
            <person name="Kato J.I."/>
        </authorList>
    </citation>
    <scope>FUNCTION</scope>
    <scope>DISRUPTION PHENOTYPE</scope>
</reference>
<protein>
    <recommendedName>
        <fullName evidence="6">Putative uric acid sigma-54-dependent transcriptional regulator UacR</fullName>
    </recommendedName>
    <alternativeName>
        <fullName evidence="5">Uric acid regulator</fullName>
    </alternativeName>
</protein>
<feature type="chain" id="PRO_0000081380" description="Putative uric acid sigma-54-dependent transcriptional regulator UacR">
    <location>
        <begin position="1"/>
        <end position="592"/>
    </location>
</feature>
<feature type="domain" description="PAS" evidence="2">
    <location>
        <begin position="158"/>
        <end position="229"/>
    </location>
</feature>
<feature type="domain" description="Sigma-54 factor interaction" evidence="3">
    <location>
        <begin position="272"/>
        <end position="502"/>
    </location>
</feature>
<feature type="DNA-binding region" description="H-T-H motif" evidence="1">
    <location>
        <begin position="567"/>
        <end position="585"/>
    </location>
</feature>
<feature type="binding site" evidence="3">
    <location>
        <begin position="300"/>
        <end position="307"/>
    </location>
    <ligand>
        <name>ATP</name>
        <dbReference type="ChEBI" id="CHEBI:30616"/>
    </ligand>
</feature>
<feature type="binding site" evidence="3">
    <location>
        <begin position="364"/>
        <end position="373"/>
    </location>
    <ligand>
        <name>ATP</name>
        <dbReference type="ChEBI" id="CHEBI:30616"/>
    </ligand>
</feature>
<name>UACR_ECOLI</name>
<comment type="function">
    <text evidence="4">Essential for both formate-dependent and formate-independent uric acid degradation. May be directly involved in the transcription of uacF in response to hypoxanthine, xanthine, and uric acid.</text>
</comment>
<comment type="disruption phenotype">
    <text evidence="4">Deletion of the gene abolishes urate-degrading activity.</text>
</comment>
<dbReference type="EMBL" id="U28375">
    <property type="protein sequence ID" value="AAA83050.1"/>
    <property type="molecule type" value="Genomic_DNA"/>
</dbReference>
<dbReference type="EMBL" id="U00096">
    <property type="protein sequence ID" value="AAC75907.1"/>
    <property type="molecule type" value="Genomic_DNA"/>
</dbReference>
<dbReference type="EMBL" id="AP009048">
    <property type="protein sequence ID" value="BAE76935.1"/>
    <property type="molecule type" value="Genomic_DNA"/>
</dbReference>
<dbReference type="PIR" id="E65070">
    <property type="entry name" value="E65070"/>
</dbReference>
<dbReference type="RefSeq" id="NP_417345.1">
    <property type="nucleotide sequence ID" value="NC_000913.3"/>
</dbReference>
<dbReference type="RefSeq" id="WP_000417791.1">
    <property type="nucleotide sequence ID" value="NZ_LN832404.1"/>
</dbReference>
<dbReference type="SMR" id="Q46802"/>
<dbReference type="BioGRID" id="4261521">
    <property type="interactions" value="90"/>
</dbReference>
<dbReference type="BioGRID" id="851647">
    <property type="interactions" value="5"/>
</dbReference>
<dbReference type="DIP" id="DIP-12157N"/>
<dbReference type="FunCoup" id="Q46802">
    <property type="interactions" value="83"/>
</dbReference>
<dbReference type="IntAct" id="Q46802">
    <property type="interactions" value="15"/>
</dbReference>
<dbReference type="STRING" id="511145.b2869"/>
<dbReference type="jPOST" id="Q46802"/>
<dbReference type="PaxDb" id="511145-b2869"/>
<dbReference type="EnsemblBacteria" id="AAC75907">
    <property type="protein sequence ID" value="AAC75907"/>
    <property type="gene ID" value="b2869"/>
</dbReference>
<dbReference type="GeneID" id="947320"/>
<dbReference type="KEGG" id="ecj:JW2837"/>
<dbReference type="KEGG" id="eco:b2869"/>
<dbReference type="KEGG" id="ecoc:C3026_15740"/>
<dbReference type="PATRIC" id="fig|1411691.4.peg.3865"/>
<dbReference type="EchoBASE" id="EB2864"/>
<dbReference type="eggNOG" id="COG3829">
    <property type="taxonomic scope" value="Bacteria"/>
</dbReference>
<dbReference type="HOGENOM" id="CLU_000445_8_1_6"/>
<dbReference type="InParanoid" id="Q46802"/>
<dbReference type="OMA" id="WLFLMAF"/>
<dbReference type="OrthoDB" id="9804019at2"/>
<dbReference type="PhylomeDB" id="Q46802"/>
<dbReference type="BioCyc" id="EcoCyc:G7488-MONOMER"/>
<dbReference type="PRO" id="PR:Q46802"/>
<dbReference type="Proteomes" id="UP000000625">
    <property type="component" value="Chromosome"/>
</dbReference>
<dbReference type="GO" id="GO:0032993">
    <property type="term" value="C:protein-DNA complex"/>
    <property type="evidence" value="ECO:0000318"/>
    <property type="project" value="GO_Central"/>
</dbReference>
<dbReference type="GO" id="GO:0005524">
    <property type="term" value="F:ATP binding"/>
    <property type="evidence" value="ECO:0007669"/>
    <property type="project" value="UniProtKB-KW"/>
</dbReference>
<dbReference type="GO" id="GO:0016887">
    <property type="term" value="F:ATP hydrolysis activity"/>
    <property type="evidence" value="ECO:0007669"/>
    <property type="project" value="InterPro"/>
</dbReference>
<dbReference type="GO" id="GO:0000987">
    <property type="term" value="F:cis-regulatory region sequence-specific DNA binding"/>
    <property type="evidence" value="ECO:0000318"/>
    <property type="project" value="GO_Central"/>
</dbReference>
<dbReference type="GO" id="GO:0001216">
    <property type="term" value="F:DNA-binding transcription activator activity"/>
    <property type="evidence" value="ECO:0000318"/>
    <property type="project" value="GO_Central"/>
</dbReference>
<dbReference type="GO" id="GO:0045893">
    <property type="term" value="P:positive regulation of DNA-templated transcription"/>
    <property type="evidence" value="ECO:0000318"/>
    <property type="project" value="GO_Central"/>
</dbReference>
<dbReference type="GO" id="GO:0019628">
    <property type="term" value="P:urate catabolic process"/>
    <property type="evidence" value="ECO:0000315"/>
    <property type="project" value="EcoCyc"/>
</dbReference>
<dbReference type="CDD" id="cd00009">
    <property type="entry name" value="AAA"/>
    <property type="match status" value="1"/>
</dbReference>
<dbReference type="CDD" id="cd00130">
    <property type="entry name" value="PAS"/>
    <property type="match status" value="1"/>
</dbReference>
<dbReference type="FunFam" id="3.40.50.300:FF:000006">
    <property type="entry name" value="DNA-binding transcriptional regulator NtrC"/>
    <property type="match status" value="1"/>
</dbReference>
<dbReference type="FunFam" id="1.10.8.60:FF:000098">
    <property type="entry name" value="Sigma-54-dependent transcriptional regulator YgeV"/>
    <property type="match status" value="1"/>
</dbReference>
<dbReference type="Gene3D" id="1.10.8.60">
    <property type="match status" value="1"/>
</dbReference>
<dbReference type="Gene3D" id="1.10.10.60">
    <property type="entry name" value="Homeodomain-like"/>
    <property type="match status" value="1"/>
</dbReference>
<dbReference type="Gene3D" id="3.40.50.300">
    <property type="entry name" value="P-loop containing nucleotide triphosphate hydrolases"/>
    <property type="match status" value="1"/>
</dbReference>
<dbReference type="Gene3D" id="3.30.450.20">
    <property type="entry name" value="PAS domain"/>
    <property type="match status" value="1"/>
</dbReference>
<dbReference type="InterPro" id="IPR003593">
    <property type="entry name" value="AAA+_ATPase"/>
</dbReference>
<dbReference type="InterPro" id="IPR009057">
    <property type="entry name" value="Homeodomain-like_sf"/>
</dbReference>
<dbReference type="InterPro" id="IPR002197">
    <property type="entry name" value="HTH_Fis"/>
</dbReference>
<dbReference type="InterPro" id="IPR027417">
    <property type="entry name" value="P-loop_NTPase"/>
</dbReference>
<dbReference type="InterPro" id="IPR000014">
    <property type="entry name" value="PAS"/>
</dbReference>
<dbReference type="InterPro" id="IPR035965">
    <property type="entry name" value="PAS-like_dom_sf"/>
</dbReference>
<dbReference type="InterPro" id="IPR002078">
    <property type="entry name" value="Sigma_54_int"/>
</dbReference>
<dbReference type="InterPro" id="IPR025662">
    <property type="entry name" value="Sigma_54_int_dom_ATP-bd_1"/>
</dbReference>
<dbReference type="InterPro" id="IPR025943">
    <property type="entry name" value="Sigma_54_int_dom_ATP-bd_2"/>
</dbReference>
<dbReference type="InterPro" id="IPR025944">
    <property type="entry name" value="Sigma_54_int_dom_CS"/>
</dbReference>
<dbReference type="PANTHER" id="PTHR32071:SF117">
    <property type="entry name" value="PTS-DEPENDENT DIHYDROXYACETONE KINASE OPERON REGULATORY PROTEIN-RELATED"/>
    <property type="match status" value="1"/>
</dbReference>
<dbReference type="PANTHER" id="PTHR32071">
    <property type="entry name" value="TRANSCRIPTIONAL REGULATORY PROTEIN"/>
    <property type="match status" value="1"/>
</dbReference>
<dbReference type="Pfam" id="PF02954">
    <property type="entry name" value="HTH_8"/>
    <property type="match status" value="1"/>
</dbReference>
<dbReference type="Pfam" id="PF13188">
    <property type="entry name" value="PAS_8"/>
    <property type="match status" value="1"/>
</dbReference>
<dbReference type="Pfam" id="PF00158">
    <property type="entry name" value="Sigma54_activat"/>
    <property type="match status" value="1"/>
</dbReference>
<dbReference type="SMART" id="SM00382">
    <property type="entry name" value="AAA"/>
    <property type="match status" value="1"/>
</dbReference>
<dbReference type="SMART" id="SM00091">
    <property type="entry name" value="PAS"/>
    <property type="match status" value="1"/>
</dbReference>
<dbReference type="SUPFAM" id="SSF46689">
    <property type="entry name" value="Homeodomain-like"/>
    <property type="match status" value="1"/>
</dbReference>
<dbReference type="SUPFAM" id="SSF52540">
    <property type="entry name" value="P-loop containing nucleoside triphosphate hydrolases"/>
    <property type="match status" value="1"/>
</dbReference>
<dbReference type="SUPFAM" id="SSF55785">
    <property type="entry name" value="PYP-like sensor domain (PAS domain)"/>
    <property type="match status" value="1"/>
</dbReference>
<dbReference type="PROSITE" id="PS50112">
    <property type="entry name" value="PAS"/>
    <property type="match status" value="1"/>
</dbReference>
<dbReference type="PROSITE" id="PS00675">
    <property type="entry name" value="SIGMA54_INTERACT_1"/>
    <property type="match status" value="1"/>
</dbReference>
<dbReference type="PROSITE" id="PS00676">
    <property type="entry name" value="SIGMA54_INTERACT_2"/>
    <property type="match status" value="1"/>
</dbReference>
<dbReference type="PROSITE" id="PS00688">
    <property type="entry name" value="SIGMA54_INTERACT_3"/>
    <property type="match status" value="1"/>
</dbReference>
<dbReference type="PROSITE" id="PS50045">
    <property type="entry name" value="SIGMA54_INTERACT_4"/>
    <property type="match status" value="1"/>
</dbReference>
<keyword id="KW-0067">ATP-binding</keyword>
<keyword id="KW-0238">DNA-binding</keyword>
<keyword id="KW-0547">Nucleotide-binding</keyword>
<keyword id="KW-1185">Reference proteome</keyword>
<keyword id="KW-0804">Transcription</keyword>
<keyword id="KW-0805">Transcription regulation</keyword>
<accession>Q46802</accession>
<accession>Q2M9X1</accession>
<gene>
    <name evidence="5" type="primary">uacR</name>
    <name type="synonym">ygeV</name>
    <name type="ordered locus">b2869</name>
    <name type="ordered locus">JW2837</name>
</gene>
<organism>
    <name type="scientific">Escherichia coli (strain K12)</name>
    <dbReference type="NCBI Taxonomy" id="83333"/>
    <lineage>
        <taxon>Bacteria</taxon>
        <taxon>Pseudomonadati</taxon>
        <taxon>Pseudomonadota</taxon>
        <taxon>Gammaproteobacteria</taxon>
        <taxon>Enterobacterales</taxon>
        <taxon>Enterobacteriaceae</taxon>
        <taxon>Escherichia</taxon>
    </lineage>
</organism>
<sequence length="592" mass="66096">MELATTQSVLMQIQPTIQRFARMLASVLQLEVEIVDENLCRVAGTGAYGKFLGRQLSGNSRLLRHVLETKTEKVVTQSRFDPLCEGCDSKENCREKAFLGTPVILQDRCVGVISLIAVTHEQQEHISDNLREFSDYVRHISTIFVSKLLEDQGPGDNISKIFATMIDNMDQGVLVVDDENRVQFVNQTALKTLGVVQNNIIGKPIRFRPLTFESNFTHGHMQHIVSWDDKSELIIGQLHNIQGRQLFLMAFHQSHTSFSVANAPDEPHIEQLVGECRVMRQLKRLISRIAPSPSSVMVVGESGTGKEVVARAIHKLSGRRNKPFIAINCAAIPEQLLESELFGYVKGAFTGASANGKTGLIQAANTGTLFLDEIGDMPLMLQAKLLRAIEAREILPIGASSPIQVDIRIISATNQNLAQFIAEGKFREDLFYRLNVIPITLPPLRERQEDIELLVHYFLHLHTRRLGSVYPGIAPDVVEILRKHRWPGNLRELSNLMEYLVNVVPSGEVIDSTLLPPNLLNNGTTEQSDVTEVSEAHLSLDDAGGTALEEMEKQMIREALSRHNSKKQVADELGIGIATLYRKIKKYELLNT</sequence>